<organism>
    <name type="scientific">Clostridium kluyveri (strain NBRC 12016)</name>
    <dbReference type="NCBI Taxonomy" id="583346"/>
    <lineage>
        <taxon>Bacteria</taxon>
        <taxon>Bacillati</taxon>
        <taxon>Bacillota</taxon>
        <taxon>Clostridia</taxon>
        <taxon>Eubacteriales</taxon>
        <taxon>Clostridiaceae</taxon>
        <taxon>Clostridium</taxon>
    </lineage>
</organism>
<evidence type="ECO:0000255" key="1">
    <source>
        <dbReference type="HAMAP-Rule" id="MF_00719"/>
    </source>
</evidence>
<gene>
    <name evidence="1" type="primary">cobS</name>
    <name type="ordered locus">CKR_2949</name>
</gene>
<dbReference type="EC" id="2.7.8.26" evidence="1"/>
<dbReference type="EMBL" id="AP009049">
    <property type="protein sequence ID" value="BAH08000.1"/>
    <property type="molecule type" value="Genomic_DNA"/>
</dbReference>
<dbReference type="RefSeq" id="WP_012103674.1">
    <property type="nucleotide sequence ID" value="NC_011837.1"/>
</dbReference>
<dbReference type="KEGG" id="ckr:CKR_2949"/>
<dbReference type="HOGENOM" id="CLU_057426_1_2_9"/>
<dbReference type="UniPathway" id="UPA00148">
    <property type="reaction ID" value="UER00238"/>
</dbReference>
<dbReference type="Proteomes" id="UP000007969">
    <property type="component" value="Chromosome"/>
</dbReference>
<dbReference type="GO" id="GO:0005886">
    <property type="term" value="C:plasma membrane"/>
    <property type="evidence" value="ECO:0007669"/>
    <property type="project" value="UniProtKB-SubCell"/>
</dbReference>
<dbReference type="GO" id="GO:0051073">
    <property type="term" value="F:adenosylcobinamide-GDP ribazoletransferase activity"/>
    <property type="evidence" value="ECO:0007669"/>
    <property type="project" value="UniProtKB-UniRule"/>
</dbReference>
<dbReference type="GO" id="GO:0008818">
    <property type="term" value="F:cobalamin 5'-phosphate synthase activity"/>
    <property type="evidence" value="ECO:0007669"/>
    <property type="project" value="UniProtKB-UniRule"/>
</dbReference>
<dbReference type="GO" id="GO:0009236">
    <property type="term" value="P:cobalamin biosynthetic process"/>
    <property type="evidence" value="ECO:0007669"/>
    <property type="project" value="UniProtKB-UniRule"/>
</dbReference>
<dbReference type="HAMAP" id="MF_00719">
    <property type="entry name" value="CobS"/>
    <property type="match status" value="1"/>
</dbReference>
<dbReference type="InterPro" id="IPR003805">
    <property type="entry name" value="CobS"/>
</dbReference>
<dbReference type="NCBIfam" id="TIGR00317">
    <property type="entry name" value="cobS"/>
    <property type="match status" value="1"/>
</dbReference>
<dbReference type="PANTHER" id="PTHR34148">
    <property type="entry name" value="ADENOSYLCOBINAMIDE-GDP RIBAZOLETRANSFERASE"/>
    <property type="match status" value="1"/>
</dbReference>
<dbReference type="PANTHER" id="PTHR34148:SF1">
    <property type="entry name" value="ADENOSYLCOBINAMIDE-GDP RIBAZOLETRANSFERASE"/>
    <property type="match status" value="1"/>
</dbReference>
<dbReference type="Pfam" id="PF02654">
    <property type="entry name" value="CobS"/>
    <property type="match status" value="1"/>
</dbReference>
<name>COBS_CLOK1</name>
<reference key="1">
    <citation type="submission" date="2005-09" db="EMBL/GenBank/DDBJ databases">
        <title>Complete genome sequence of Clostridium kluyveri and comparative genomics of Clostridia species.</title>
        <authorList>
            <person name="Inui M."/>
            <person name="Nonaka H."/>
            <person name="Shinoda Y."/>
            <person name="Ikenaga Y."/>
            <person name="Abe M."/>
            <person name="Naito K."/>
            <person name="Vertes A.A."/>
            <person name="Yukawa H."/>
        </authorList>
    </citation>
    <scope>NUCLEOTIDE SEQUENCE [LARGE SCALE GENOMIC DNA]</scope>
    <source>
        <strain>NBRC 12016</strain>
    </source>
</reference>
<comment type="function">
    <text evidence="1">Joins adenosylcobinamide-GDP and alpha-ribazole to generate adenosylcobalamin (Ado-cobalamin). Also synthesizes adenosylcobalamin 5'-phosphate from adenosylcobinamide-GDP and alpha-ribazole 5'-phosphate.</text>
</comment>
<comment type="catalytic activity">
    <reaction evidence="1">
        <text>alpha-ribazole + adenosylcob(III)inamide-GDP = adenosylcob(III)alamin + GMP + H(+)</text>
        <dbReference type="Rhea" id="RHEA:16049"/>
        <dbReference type="ChEBI" id="CHEBI:10329"/>
        <dbReference type="ChEBI" id="CHEBI:15378"/>
        <dbReference type="ChEBI" id="CHEBI:18408"/>
        <dbReference type="ChEBI" id="CHEBI:58115"/>
        <dbReference type="ChEBI" id="CHEBI:60487"/>
        <dbReference type="EC" id="2.7.8.26"/>
    </reaction>
</comment>
<comment type="catalytic activity">
    <reaction evidence="1">
        <text>alpha-ribazole 5'-phosphate + adenosylcob(III)inamide-GDP = adenosylcob(III)alamin 5'-phosphate + GMP + H(+)</text>
        <dbReference type="Rhea" id="RHEA:23560"/>
        <dbReference type="ChEBI" id="CHEBI:15378"/>
        <dbReference type="ChEBI" id="CHEBI:57918"/>
        <dbReference type="ChEBI" id="CHEBI:58115"/>
        <dbReference type="ChEBI" id="CHEBI:60487"/>
        <dbReference type="ChEBI" id="CHEBI:60493"/>
        <dbReference type="EC" id="2.7.8.26"/>
    </reaction>
</comment>
<comment type="cofactor">
    <cofactor evidence="1">
        <name>Mg(2+)</name>
        <dbReference type="ChEBI" id="CHEBI:18420"/>
    </cofactor>
</comment>
<comment type="pathway">
    <text evidence="1">Cofactor biosynthesis; adenosylcobalamin biosynthesis; adenosylcobalamin from cob(II)yrinate a,c-diamide: step 7/7.</text>
</comment>
<comment type="subcellular location">
    <subcellularLocation>
        <location evidence="1">Cell membrane</location>
        <topology evidence="1">Multi-pass membrane protein</topology>
    </subcellularLocation>
</comment>
<comment type="similarity">
    <text evidence="1">Belongs to the CobS family.</text>
</comment>
<protein>
    <recommendedName>
        <fullName evidence="1">Adenosylcobinamide-GDP ribazoletransferase</fullName>
        <ecNumber evidence="1">2.7.8.26</ecNumber>
    </recommendedName>
    <alternativeName>
        <fullName evidence="1">Cobalamin synthase</fullName>
    </alternativeName>
    <alternativeName>
        <fullName evidence="1">Cobalamin-5'-phosphate synthase</fullName>
    </alternativeName>
</protein>
<proteinExistence type="inferred from homology"/>
<keyword id="KW-1003">Cell membrane</keyword>
<keyword id="KW-0169">Cobalamin biosynthesis</keyword>
<keyword id="KW-0460">Magnesium</keyword>
<keyword id="KW-0472">Membrane</keyword>
<keyword id="KW-0808">Transferase</keyword>
<keyword id="KW-0812">Transmembrane</keyword>
<keyword id="KW-1133">Transmembrane helix</keyword>
<sequence length="252" mass="28198">MKELLNDFFLILQLLTRIPVNRNLLCRRENFRRGASFMPLVGVIVGGIQWIIYKLCIIIFSLNVSIVIVILAGIVLTGALHVDGLGDMCDGFFSFKEKGKIIEIMKDSRIGTYACLAIIIDILLKYSFFCSIVPSFSLIIIIAPVMSRFSIVFIAFIGKPAKSTGSGNLFVENIGKWQLFWAAFITVITLFFLMNMNFIYVIILIFAGLFMSFLFNVFCNRKAGGLTGDLLGANNEIVEILTMVMLCVIITK</sequence>
<feature type="chain" id="PRO_1000148019" description="Adenosylcobinamide-GDP ribazoletransferase">
    <location>
        <begin position="1"/>
        <end position="252"/>
    </location>
</feature>
<feature type="transmembrane region" description="Helical" evidence="1">
    <location>
        <begin position="34"/>
        <end position="54"/>
    </location>
</feature>
<feature type="transmembrane region" description="Helical" evidence="1">
    <location>
        <begin position="55"/>
        <end position="75"/>
    </location>
</feature>
<feature type="transmembrane region" description="Helical" evidence="1">
    <location>
        <begin position="113"/>
        <end position="133"/>
    </location>
</feature>
<feature type="transmembrane region" description="Helical" evidence="1">
    <location>
        <begin position="138"/>
        <end position="158"/>
    </location>
</feature>
<feature type="transmembrane region" description="Helical" evidence="1">
    <location>
        <begin position="174"/>
        <end position="194"/>
    </location>
</feature>
<feature type="transmembrane region" description="Helical" evidence="1">
    <location>
        <begin position="198"/>
        <end position="218"/>
    </location>
</feature>
<feature type="transmembrane region" description="Helical" evidence="1">
    <location>
        <begin position="230"/>
        <end position="250"/>
    </location>
</feature>
<accession>B9E675</accession>